<sequence length="273" mass="28771">MHDANIRVAIAGAGGRMGRQLIQAALALEGVQLGAALEREGSSLLGSDAGELAGAGKTGVTVQSSLDAIKDDFDVFIDFTRPEGTLNHLAFCRQHGKGMVIGTTGFDEAGKQAIRDAAADIAIVFAANFSVGVNVMLKLLEKAAKVMGDYTDIEIIEAHHRHKVDAPSGTALAMGEAIAHALDKDLKDCAVYSREGHTGERVPGTIGFATVRAGDIVGEHTAMFADIGERLEITHKASSRMTFANGAVRSALWLSGKESGIFDMRDVLDLNNL</sequence>
<comment type="function">
    <text evidence="1">Catalyzes the conversion of 4-hydroxy-tetrahydrodipicolinate (HTPA) to tetrahydrodipicolinate.</text>
</comment>
<comment type="catalytic activity">
    <reaction evidence="1">
        <text>(S)-2,3,4,5-tetrahydrodipicolinate + NAD(+) + H2O = (2S,4S)-4-hydroxy-2,3,4,5-tetrahydrodipicolinate + NADH + H(+)</text>
        <dbReference type="Rhea" id="RHEA:35323"/>
        <dbReference type="ChEBI" id="CHEBI:15377"/>
        <dbReference type="ChEBI" id="CHEBI:15378"/>
        <dbReference type="ChEBI" id="CHEBI:16845"/>
        <dbReference type="ChEBI" id="CHEBI:57540"/>
        <dbReference type="ChEBI" id="CHEBI:57945"/>
        <dbReference type="ChEBI" id="CHEBI:67139"/>
        <dbReference type="EC" id="1.17.1.8"/>
    </reaction>
</comment>
<comment type="catalytic activity">
    <reaction evidence="1">
        <text>(S)-2,3,4,5-tetrahydrodipicolinate + NADP(+) + H2O = (2S,4S)-4-hydroxy-2,3,4,5-tetrahydrodipicolinate + NADPH + H(+)</text>
        <dbReference type="Rhea" id="RHEA:35331"/>
        <dbReference type="ChEBI" id="CHEBI:15377"/>
        <dbReference type="ChEBI" id="CHEBI:15378"/>
        <dbReference type="ChEBI" id="CHEBI:16845"/>
        <dbReference type="ChEBI" id="CHEBI:57783"/>
        <dbReference type="ChEBI" id="CHEBI:58349"/>
        <dbReference type="ChEBI" id="CHEBI:67139"/>
        <dbReference type="EC" id="1.17.1.8"/>
    </reaction>
</comment>
<comment type="pathway">
    <text evidence="1">Amino-acid biosynthesis; L-lysine biosynthesis via DAP pathway; (S)-tetrahydrodipicolinate from L-aspartate: step 4/4.</text>
</comment>
<comment type="subunit">
    <text evidence="1">Homotetramer.</text>
</comment>
<comment type="subcellular location">
    <subcellularLocation>
        <location evidence="1">Cytoplasm</location>
    </subcellularLocation>
</comment>
<comment type="similarity">
    <text evidence="1">Belongs to the DapB family.</text>
</comment>
<comment type="caution">
    <text evidence="2">Was originally thought to be a dihydrodipicolinate reductase (DHDPR), catalyzing the conversion of dihydrodipicolinate to tetrahydrodipicolinate. However, it was shown in E.coli that the substrate of the enzymatic reaction is not dihydrodipicolinate (DHDP) but in fact (2S,4S)-4-hydroxy-2,3,4,5-tetrahydrodipicolinic acid (HTPA), the product released by the DapA-catalyzed reaction.</text>
</comment>
<keyword id="KW-0028">Amino-acid biosynthesis</keyword>
<keyword id="KW-0963">Cytoplasm</keyword>
<keyword id="KW-0220">Diaminopimelate biosynthesis</keyword>
<keyword id="KW-0457">Lysine biosynthesis</keyword>
<keyword id="KW-0520">NAD</keyword>
<keyword id="KW-0521">NADP</keyword>
<keyword id="KW-0560">Oxidoreductase</keyword>
<keyword id="KW-1185">Reference proteome</keyword>
<reference key="1">
    <citation type="journal article" date="2009" name="J. Bacteriol.">
        <title>Complete genome sequence and comparative genome analysis of enteropathogenic Escherichia coli O127:H6 strain E2348/69.</title>
        <authorList>
            <person name="Iguchi A."/>
            <person name="Thomson N.R."/>
            <person name="Ogura Y."/>
            <person name="Saunders D."/>
            <person name="Ooka T."/>
            <person name="Henderson I.R."/>
            <person name="Harris D."/>
            <person name="Asadulghani M."/>
            <person name="Kurokawa K."/>
            <person name="Dean P."/>
            <person name="Kenny B."/>
            <person name="Quail M.A."/>
            <person name="Thurston S."/>
            <person name="Dougan G."/>
            <person name="Hayashi T."/>
            <person name="Parkhill J."/>
            <person name="Frankel G."/>
        </authorList>
    </citation>
    <scope>NUCLEOTIDE SEQUENCE [LARGE SCALE GENOMIC DNA]</scope>
    <source>
        <strain>E2348/69 / EPEC</strain>
    </source>
</reference>
<name>DAPB_ECO27</name>
<organism>
    <name type="scientific">Escherichia coli O127:H6 (strain E2348/69 / EPEC)</name>
    <dbReference type="NCBI Taxonomy" id="574521"/>
    <lineage>
        <taxon>Bacteria</taxon>
        <taxon>Pseudomonadati</taxon>
        <taxon>Pseudomonadota</taxon>
        <taxon>Gammaproteobacteria</taxon>
        <taxon>Enterobacterales</taxon>
        <taxon>Enterobacteriaceae</taxon>
        <taxon>Escherichia</taxon>
    </lineage>
</organism>
<protein>
    <recommendedName>
        <fullName evidence="1">4-hydroxy-tetrahydrodipicolinate reductase</fullName>
        <shortName evidence="1">HTPA reductase</shortName>
        <ecNumber evidence="1">1.17.1.8</ecNumber>
    </recommendedName>
</protein>
<feature type="chain" id="PRO_1000118853" description="4-hydroxy-tetrahydrodipicolinate reductase">
    <location>
        <begin position="1"/>
        <end position="273"/>
    </location>
</feature>
<feature type="active site" description="Proton donor/acceptor" evidence="1">
    <location>
        <position position="159"/>
    </location>
</feature>
<feature type="active site" description="Proton donor" evidence="1">
    <location>
        <position position="163"/>
    </location>
</feature>
<feature type="binding site" evidence="1">
    <location>
        <begin position="12"/>
        <end position="17"/>
    </location>
    <ligand>
        <name>NAD(+)</name>
        <dbReference type="ChEBI" id="CHEBI:57540"/>
    </ligand>
</feature>
<feature type="binding site" evidence="1">
    <location>
        <position position="38"/>
    </location>
    <ligand>
        <name>NAD(+)</name>
        <dbReference type="ChEBI" id="CHEBI:57540"/>
    </ligand>
</feature>
<feature type="binding site" evidence="1">
    <location>
        <position position="39"/>
    </location>
    <ligand>
        <name>NADP(+)</name>
        <dbReference type="ChEBI" id="CHEBI:58349"/>
    </ligand>
</feature>
<feature type="binding site" evidence="1">
    <location>
        <begin position="102"/>
        <end position="104"/>
    </location>
    <ligand>
        <name>NAD(+)</name>
        <dbReference type="ChEBI" id="CHEBI:57540"/>
    </ligand>
</feature>
<feature type="binding site" evidence="1">
    <location>
        <begin position="126"/>
        <end position="129"/>
    </location>
    <ligand>
        <name>NAD(+)</name>
        <dbReference type="ChEBI" id="CHEBI:57540"/>
    </ligand>
</feature>
<feature type="binding site" evidence="1">
    <location>
        <position position="160"/>
    </location>
    <ligand>
        <name>(S)-2,3,4,5-tetrahydrodipicolinate</name>
        <dbReference type="ChEBI" id="CHEBI:16845"/>
    </ligand>
</feature>
<feature type="binding site" evidence="1">
    <location>
        <begin position="169"/>
        <end position="170"/>
    </location>
    <ligand>
        <name>(S)-2,3,4,5-tetrahydrodipicolinate</name>
        <dbReference type="ChEBI" id="CHEBI:16845"/>
    </ligand>
</feature>
<dbReference type="EC" id="1.17.1.8" evidence="1"/>
<dbReference type="EMBL" id="FM180568">
    <property type="protein sequence ID" value="CAS07579.1"/>
    <property type="molecule type" value="Genomic_DNA"/>
</dbReference>
<dbReference type="RefSeq" id="WP_000543583.1">
    <property type="nucleotide sequence ID" value="NC_011601.1"/>
</dbReference>
<dbReference type="SMR" id="B7UI76"/>
<dbReference type="KEGG" id="ecg:E2348C_0031"/>
<dbReference type="HOGENOM" id="CLU_047479_2_1_6"/>
<dbReference type="UniPathway" id="UPA00034">
    <property type="reaction ID" value="UER00018"/>
</dbReference>
<dbReference type="Proteomes" id="UP000008205">
    <property type="component" value="Chromosome"/>
</dbReference>
<dbReference type="GO" id="GO:0005829">
    <property type="term" value="C:cytosol"/>
    <property type="evidence" value="ECO:0007669"/>
    <property type="project" value="TreeGrafter"/>
</dbReference>
<dbReference type="GO" id="GO:0008839">
    <property type="term" value="F:4-hydroxy-tetrahydrodipicolinate reductase"/>
    <property type="evidence" value="ECO:0007669"/>
    <property type="project" value="UniProtKB-EC"/>
</dbReference>
<dbReference type="GO" id="GO:0051287">
    <property type="term" value="F:NAD binding"/>
    <property type="evidence" value="ECO:0007669"/>
    <property type="project" value="UniProtKB-UniRule"/>
</dbReference>
<dbReference type="GO" id="GO:0050661">
    <property type="term" value="F:NADP binding"/>
    <property type="evidence" value="ECO:0007669"/>
    <property type="project" value="UniProtKB-UniRule"/>
</dbReference>
<dbReference type="GO" id="GO:0016726">
    <property type="term" value="F:oxidoreductase activity, acting on CH or CH2 groups, NAD or NADP as acceptor"/>
    <property type="evidence" value="ECO:0007669"/>
    <property type="project" value="UniProtKB-UniRule"/>
</dbReference>
<dbReference type="GO" id="GO:0019877">
    <property type="term" value="P:diaminopimelate biosynthetic process"/>
    <property type="evidence" value="ECO:0007669"/>
    <property type="project" value="UniProtKB-UniRule"/>
</dbReference>
<dbReference type="GO" id="GO:0009089">
    <property type="term" value="P:lysine biosynthetic process via diaminopimelate"/>
    <property type="evidence" value="ECO:0007669"/>
    <property type="project" value="UniProtKB-UniRule"/>
</dbReference>
<dbReference type="CDD" id="cd02274">
    <property type="entry name" value="DHDPR_N"/>
    <property type="match status" value="1"/>
</dbReference>
<dbReference type="FunFam" id="3.30.360.10:FF:000004">
    <property type="entry name" value="4-hydroxy-tetrahydrodipicolinate reductase"/>
    <property type="match status" value="1"/>
</dbReference>
<dbReference type="FunFam" id="3.40.50.720:FF:000048">
    <property type="entry name" value="4-hydroxy-tetrahydrodipicolinate reductase"/>
    <property type="match status" value="1"/>
</dbReference>
<dbReference type="Gene3D" id="3.30.360.10">
    <property type="entry name" value="Dihydrodipicolinate Reductase, domain 2"/>
    <property type="match status" value="1"/>
</dbReference>
<dbReference type="Gene3D" id="3.40.50.720">
    <property type="entry name" value="NAD(P)-binding Rossmann-like Domain"/>
    <property type="match status" value="1"/>
</dbReference>
<dbReference type="HAMAP" id="MF_00102">
    <property type="entry name" value="DapB"/>
    <property type="match status" value="1"/>
</dbReference>
<dbReference type="InterPro" id="IPR022663">
    <property type="entry name" value="DapB_C"/>
</dbReference>
<dbReference type="InterPro" id="IPR000846">
    <property type="entry name" value="DapB_N"/>
</dbReference>
<dbReference type="InterPro" id="IPR022664">
    <property type="entry name" value="DapB_N_CS"/>
</dbReference>
<dbReference type="InterPro" id="IPR023940">
    <property type="entry name" value="DHDPR_bac"/>
</dbReference>
<dbReference type="InterPro" id="IPR036291">
    <property type="entry name" value="NAD(P)-bd_dom_sf"/>
</dbReference>
<dbReference type="NCBIfam" id="TIGR00036">
    <property type="entry name" value="dapB"/>
    <property type="match status" value="1"/>
</dbReference>
<dbReference type="PANTHER" id="PTHR20836:SF0">
    <property type="entry name" value="4-HYDROXY-TETRAHYDRODIPICOLINATE REDUCTASE 1, CHLOROPLASTIC-RELATED"/>
    <property type="match status" value="1"/>
</dbReference>
<dbReference type="PANTHER" id="PTHR20836">
    <property type="entry name" value="DIHYDRODIPICOLINATE REDUCTASE"/>
    <property type="match status" value="1"/>
</dbReference>
<dbReference type="Pfam" id="PF05173">
    <property type="entry name" value="DapB_C"/>
    <property type="match status" value="1"/>
</dbReference>
<dbReference type="Pfam" id="PF01113">
    <property type="entry name" value="DapB_N"/>
    <property type="match status" value="1"/>
</dbReference>
<dbReference type="PIRSF" id="PIRSF000161">
    <property type="entry name" value="DHPR"/>
    <property type="match status" value="1"/>
</dbReference>
<dbReference type="SUPFAM" id="SSF55347">
    <property type="entry name" value="Glyceraldehyde-3-phosphate dehydrogenase-like, C-terminal domain"/>
    <property type="match status" value="1"/>
</dbReference>
<dbReference type="SUPFAM" id="SSF51735">
    <property type="entry name" value="NAD(P)-binding Rossmann-fold domains"/>
    <property type="match status" value="1"/>
</dbReference>
<dbReference type="PROSITE" id="PS01298">
    <property type="entry name" value="DAPB"/>
    <property type="match status" value="1"/>
</dbReference>
<evidence type="ECO:0000255" key="1">
    <source>
        <dbReference type="HAMAP-Rule" id="MF_00102"/>
    </source>
</evidence>
<evidence type="ECO:0000305" key="2"/>
<accession>B7UI76</accession>
<gene>
    <name evidence="1" type="primary">dapB</name>
    <name type="ordered locus">E2348C_0031</name>
</gene>
<proteinExistence type="inferred from homology"/>